<comment type="function">
    <text evidence="1">Catalyzes the NADPH-dependent reduction of glyoxylate and hydroxypyruvate into glycolate and glycerate, respectively.</text>
</comment>
<comment type="catalytic activity">
    <reaction evidence="1">
        <text>glycolate + NADP(+) = glyoxylate + NADPH + H(+)</text>
        <dbReference type="Rhea" id="RHEA:10992"/>
        <dbReference type="ChEBI" id="CHEBI:15378"/>
        <dbReference type="ChEBI" id="CHEBI:29805"/>
        <dbReference type="ChEBI" id="CHEBI:36655"/>
        <dbReference type="ChEBI" id="CHEBI:57783"/>
        <dbReference type="ChEBI" id="CHEBI:58349"/>
        <dbReference type="EC" id="1.1.1.79"/>
    </reaction>
</comment>
<comment type="catalytic activity">
    <reaction evidence="1">
        <text>(R)-glycerate + NAD(+) = 3-hydroxypyruvate + NADH + H(+)</text>
        <dbReference type="Rhea" id="RHEA:17905"/>
        <dbReference type="ChEBI" id="CHEBI:15378"/>
        <dbReference type="ChEBI" id="CHEBI:16659"/>
        <dbReference type="ChEBI" id="CHEBI:17180"/>
        <dbReference type="ChEBI" id="CHEBI:57540"/>
        <dbReference type="ChEBI" id="CHEBI:57945"/>
        <dbReference type="EC" id="1.1.1.81"/>
    </reaction>
</comment>
<comment type="catalytic activity">
    <reaction evidence="1">
        <text>(R)-glycerate + NADP(+) = 3-hydroxypyruvate + NADPH + H(+)</text>
        <dbReference type="Rhea" id="RHEA:18657"/>
        <dbReference type="ChEBI" id="CHEBI:15378"/>
        <dbReference type="ChEBI" id="CHEBI:16659"/>
        <dbReference type="ChEBI" id="CHEBI:17180"/>
        <dbReference type="ChEBI" id="CHEBI:57783"/>
        <dbReference type="ChEBI" id="CHEBI:58349"/>
        <dbReference type="EC" id="1.1.1.81"/>
    </reaction>
</comment>
<comment type="subunit">
    <text evidence="1">Homodimer.</text>
</comment>
<comment type="subcellular location">
    <subcellularLocation>
        <location evidence="1">Cytoplasm</location>
    </subcellularLocation>
</comment>
<comment type="similarity">
    <text evidence="1">Belongs to the D-isomer specific 2-hydroxyacid dehydrogenase family. GhrB subfamily.</text>
</comment>
<evidence type="ECO:0000255" key="1">
    <source>
        <dbReference type="HAMAP-Rule" id="MF_01667"/>
    </source>
</evidence>
<sequence length="324" mass="35396">MKPSVILYKALPDDLLQRLQEHFTVHQVANLSPQTVEQNAAIFAEAEGLLGSNENVDAALLEKMPKLRATSTISVGYDNFDVDALTARKILLMHTPTVLTETVADTLMALVLSTARRVVEVAERVKAGEWTASIGPDWYGTDVHHKTLGIVGMGRIGMALAQRAHFGFNMPILYNARRHHKEAEERFNARYCDLDTLLQESDFVCLILPLTDETHHLFGAEQFAKMKSSAIFINAGRGPVVDENALIAALQKGEIHAAGLDVFEQEPLSVDSPLLSMANVVAVPHIGSATHETRYGMAACAVDNLIDALQGKVEKNCVNPHVAD</sequence>
<organism>
    <name type="scientific">Escherichia coli (strain 55989 / EAEC)</name>
    <dbReference type="NCBI Taxonomy" id="585055"/>
    <lineage>
        <taxon>Bacteria</taxon>
        <taxon>Pseudomonadati</taxon>
        <taxon>Pseudomonadota</taxon>
        <taxon>Gammaproteobacteria</taxon>
        <taxon>Enterobacterales</taxon>
        <taxon>Enterobacteriaceae</taxon>
        <taxon>Escherichia</taxon>
    </lineage>
</organism>
<keyword id="KW-0963">Cytoplasm</keyword>
<keyword id="KW-0520">NAD</keyword>
<keyword id="KW-0521">NADP</keyword>
<keyword id="KW-0560">Oxidoreductase</keyword>
<keyword id="KW-1185">Reference proteome</keyword>
<accession>B7L6W9</accession>
<name>GHRB_ECO55</name>
<proteinExistence type="inferred from homology"/>
<dbReference type="EC" id="1.1.1.79" evidence="1"/>
<dbReference type="EC" id="1.1.1.81" evidence="1"/>
<dbReference type="EMBL" id="CU928145">
    <property type="protein sequence ID" value="CAV00490.1"/>
    <property type="molecule type" value="Genomic_DNA"/>
</dbReference>
<dbReference type="RefSeq" id="WP_000805027.1">
    <property type="nucleotide sequence ID" value="NC_011748.1"/>
</dbReference>
<dbReference type="SMR" id="B7L6W9"/>
<dbReference type="GeneID" id="75203026"/>
<dbReference type="KEGG" id="eck:EC55989_4009"/>
<dbReference type="HOGENOM" id="CLU_019796_1_2_6"/>
<dbReference type="Proteomes" id="UP000000746">
    <property type="component" value="Chromosome"/>
</dbReference>
<dbReference type="GO" id="GO:0005829">
    <property type="term" value="C:cytosol"/>
    <property type="evidence" value="ECO:0007669"/>
    <property type="project" value="UniProtKB-ARBA"/>
</dbReference>
<dbReference type="GO" id="GO:0005886">
    <property type="term" value="C:plasma membrane"/>
    <property type="evidence" value="ECO:0007669"/>
    <property type="project" value="UniProtKB-UniRule"/>
</dbReference>
<dbReference type="GO" id="GO:0030267">
    <property type="term" value="F:glyoxylate reductase (NADPH) activity"/>
    <property type="evidence" value="ECO:0007669"/>
    <property type="project" value="UniProtKB-UniRule"/>
</dbReference>
<dbReference type="GO" id="GO:0008465">
    <property type="term" value="F:hydroxypyruvate reductase (NADH) activity"/>
    <property type="evidence" value="ECO:0007669"/>
    <property type="project" value="RHEA"/>
</dbReference>
<dbReference type="GO" id="GO:0120509">
    <property type="term" value="F:hydroxypyruvate reductase (NADPH) activity"/>
    <property type="evidence" value="ECO:0007669"/>
    <property type="project" value="RHEA"/>
</dbReference>
<dbReference type="GO" id="GO:0051287">
    <property type="term" value="F:NAD binding"/>
    <property type="evidence" value="ECO:0007669"/>
    <property type="project" value="InterPro"/>
</dbReference>
<dbReference type="CDD" id="cd05301">
    <property type="entry name" value="GDH"/>
    <property type="match status" value="1"/>
</dbReference>
<dbReference type="FunFam" id="3.40.50.720:FF:000026">
    <property type="entry name" value="Glyoxylate/hydroxypyruvate reductase B"/>
    <property type="match status" value="1"/>
</dbReference>
<dbReference type="Gene3D" id="3.40.50.720">
    <property type="entry name" value="NAD(P)-binding Rossmann-like Domain"/>
    <property type="match status" value="2"/>
</dbReference>
<dbReference type="HAMAP" id="MF_01667">
    <property type="entry name" value="2_Hacid_dh_C_GhrB"/>
    <property type="match status" value="1"/>
</dbReference>
<dbReference type="InterPro" id="IPR050223">
    <property type="entry name" value="D-isomer_2-hydroxyacid_DH"/>
</dbReference>
<dbReference type="InterPro" id="IPR006139">
    <property type="entry name" value="D-isomer_2_OHA_DH_cat_dom"/>
</dbReference>
<dbReference type="InterPro" id="IPR029753">
    <property type="entry name" value="D-isomer_DH_CS"/>
</dbReference>
<dbReference type="InterPro" id="IPR006140">
    <property type="entry name" value="D-isomer_DH_NAD-bd"/>
</dbReference>
<dbReference type="InterPro" id="IPR023756">
    <property type="entry name" value="Glyo/OHPyrv_Rdtase_B"/>
</dbReference>
<dbReference type="InterPro" id="IPR036291">
    <property type="entry name" value="NAD(P)-bd_dom_sf"/>
</dbReference>
<dbReference type="NCBIfam" id="NF011938">
    <property type="entry name" value="PRK15409.1"/>
    <property type="match status" value="1"/>
</dbReference>
<dbReference type="PANTHER" id="PTHR10996">
    <property type="entry name" value="2-HYDROXYACID DEHYDROGENASE-RELATED"/>
    <property type="match status" value="1"/>
</dbReference>
<dbReference type="PANTHER" id="PTHR10996:SF283">
    <property type="entry name" value="GLYOXYLATE_HYDROXYPYRUVATE REDUCTASE B"/>
    <property type="match status" value="1"/>
</dbReference>
<dbReference type="Pfam" id="PF00389">
    <property type="entry name" value="2-Hacid_dh"/>
    <property type="match status" value="1"/>
</dbReference>
<dbReference type="Pfam" id="PF02826">
    <property type="entry name" value="2-Hacid_dh_C"/>
    <property type="match status" value="1"/>
</dbReference>
<dbReference type="SUPFAM" id="SSF52283">
    <property type="entry name" value="Formate/glycerate dehydrogenase catalytic domain-like"/>
    <property type="match status" value="1"/>
</dbReference>
<dbReference type="SUPFAM" id="SSF51735">
    <property type="entry name" value="NAD(P)-binding Rossmann-fold domains"/>
    <property type="match status" value="1"/>
</dbReference>
<dbReference type="PROSITE" id="PS00670">
    <property type="entry name" value="D_2_HYDROXYACID_DH_2"/>
    <property type="match status" value="1"/>
</dbReference>
<dbReference type="PROSITE" id="PS00671">
    <property type="entry name" value="D_2_HYDROXYACID_DH_3"/>
    <property type="match status" value="1"/>
</dbReference>
<feature type="chain" id="PRO_1000187284" description="Glyoxylate/hydroxypyruvate reductase B">
    <location>
        <begin position="1"/>
        <end position="324"/>
    </location>
</feature>
<feature type="active site" evidence="1">
    <location>
        <position position="237"/>
    </location>
</feature>
<feature type="active site" evidence="1">
    <location>
        <position position="266"/>
    </location>
</feature>
<feature type="active site" description="Proton donor" evidence="1">
    <location>
        <position position="285"/>
    </location>
</feature>
<protein>
    <recommendedName>
        <fullName evidence="1">Glyoxylate/hydroxypyruvate reductase B</fullName>
        <ecNumber evidence="1">1.1.1.79</ecNumber>
        <ecNumber evidence="1">1.1.1.81</ecNumber>
    </recommendedName>
</protein>
<gene>
    <name evidence="1" type="primary">ghrB</name>
    <name type="ordered locus">EC55989_4009</name>
</gene>
<reference key="1">
    <citation type="journal article" date="2009" name="PLoS Genet.">
        <title>Organised genome dynamics in the Escherichia coli species results in highly diverse adaptive paths.</title>
        <authorList>
            <person name="Touchon M."/>
            <person name="Hoede C."/>
            <person name="Tenaillon O."/>
            <person name="Barbe V."/>
            <person name="Baeriswyl S."/>
            <person name="Bidet P."/>
            <person name="Bingen E."/>
            <person name="Bonacorsi S."/>
            <person name="Bouchier C."/>
            <person name="Bouvet O."/>
            <person name="Calteau A."/>
            <person name="Chiapello H."/>
            <person name="Clermont O."/>
            <person name="Cruveiller S."/>
            <person name="Danchin A."/>
            <person name="Diard M."/>
            <person name="Dossat C."/>
            <person name="Karoui M.E."/>
            <person name="Frapy E."/>
            <person name="Garry L."/>
            <person name="Ghigo J.M."/>
            <person name="Gilles A.M."/>
            <person name="Johnson J."/>
            <person name="Le Bouguenec C."/>
            <person name="Lescat M."/>
            <person name="Mangenot S."/>
            <person name="Martinez-Jehanne V."/>
            <person name="Matic I."/>
            <person name="Nassif X."/>
            <person name="Oztas S."/>
            <person name="Petit M.A."/>
            <person name="Pichon C."/>
            <person name="Rouy Z."/>
            <person name="Ruf C.S."/>
            <person name="Schneider D."/>
            <person name="Tourret J."/>
            <person name="Vacherie B."/>
            <person name="Vallenet D."/>
            <person name="Medigue C."/>
            <person name="Rocha E.P.C."/>
            <person name="Denamur E."/>
        </authorList>
    </citation>
    <scope>NUCLEOTIDE SEQUENCE [LARGE SCALE GENOMIC DNA]</scope>
    <source>
        <strain>55989 / EAEC</strain>
    </source>
</reference>